<comment type="function">
    <text evidence="1">Mediates the nuclear export of encapsidated genomic RNAs (ribonucleoproteins, RNPs). Acts as an adapter between viral RNPs complexes and the nuclear export machinery of the cell. Possesses no intrinsic RNA-binding activity, but includes a C-terminal M1-binding domain. This domain is believed to allow recognition of RNPs bound to the protein M1. Since protein M1 is not available in large quantities before late stages of infection, such an indirect recognition mechanism probably ensures that genomic RNPs are not exported from the host nucleus until sufficient quantities of viral mRNA and progeny genomic RNA have been synthesized. Furthermore, the RNPs enter the host cytoplasm only when associated with the M1 protein that is necessary to guide them to the plasma membrane. May down-regulate viral RNA synthesis when overproduced.</text>
</comment>
<comment type="subunit">
    <text evidence="1">Interacts with protein M1. May interact with host nucleoporin RAB/HRB and exportin XPO1/CRM1.</text>
</comment>
<comment type="subcellular location">
    <subcellularLocation>
        <location evidence="1">Virion</location>
    </subcellularLocation>
    <subcellularLocation>
        <location evidence="1">Host nucleus</location>
    </subcellularLocation>
</comment>
<comment type="alternative products">
    <event type="alternative splicing"/>
    <isoform>
        <id>O09680-1</id>
        <name>NEP</name>
        <name>NS2</name>
        <sequence type="displayed"/>
    </isoform>
    <isoform>
        <id>Q6LDH2-1</id>
        <name>NS1</name>
        <sequence type="external"/>
    </isoform>
</comment>
<comment type="similarity">
    <text evidence="1">Belongs to the influenza viruses NEP family.</text>
</comment>
<proteinExistence type="inferred from homology"/>
<reference key="1">
    <citation type="journal article" date="1996" name="J. Virol.">
        <title>Emergence of avian H1N1 influenza viruses in pigs in China.</title>
        <authorList>
            <person name="Guan Y."/>
            <person name="Shortridge K.F."/>
            <person name="Krauss S."/>
            <person name="Li P.H."/>
            <person name="Kawaoka Y."/>
            <person name="Webster R.G."/>
        </authorList>
    </citation>
    <scope>NUCLEOTIDE SEQUENCE [GENOMIC RNA] OF 4-112</scope>
</reference>
<reference key="2">
    <citation type="journal article" date="2006" name="Science">
        <title>Large-scale sequence analysis of avian influenza isolates.</title>
        <authorList>
            <person name="Obenauer J.C."/>
            <person name="Denson J."/>
            <person name="Mehta P.K."/>
            <person name="Su X."/>
            <person name="Mukatira S."/>
            <person name="Finkelstein D.B."/>
            <person name="Xu X."/>
            <person name="Wang J."/>
            <person name="Ma J."/>
            <person name="Fan Y."/>
            <person name="Rakestraw K.M."/>
            <person name="Webster R.G."/>
            <person name="Hoffmann E."/>
            <person name="Krauss S."/>
            <person name="Zheng J."/>
            <person name="Zhang Z."/>
            <person name="Naeve C.W."/>
        </authorList>
    </citation>
    <scope>NUCLEOTIDE SEQUENCE [GENOMIC RNA]</scope>
</reference>
<gene>
    <name evidence="1" type="primary">NS</name>
</gene>
<protein>
    <recommendedName>
        <fullName evidence="1">Nuclear export protein</fullName>
        <shortName evidence="1">NEP</shortName>
    </recommendedName>
    <alternativeName>
        <fullName evidence="1">Non-structural protein 2</fullName>
        <shortName evidence="1">NS2</shortName>
    </alternativeName>
</protein>
<evidence type="ECO:0000255" key="1">
    <source>
        <dbReference type="HAMAP-Rule" id="MF_04067"/>
    </source>
</evidence>
<organism>
    <name type="scientific">Influenza A virus (strain A/Ruddy Turnstone/New Jersey/47/1985 H4N6)</name>
    <dbReference type="NCBI Taxonomy" id="380343"/>
    <lineage>
        <taxon>Viruses</taxon>
        <taxon>Riboviria</taxon>
        <taxon>Orthornavirae</taxon>
        <taxon>Negarnaviricota</taxon>
        <taxon>Polyploviricotina</taxon>
        <taxon>Insthoviricetes</taxon>
        <taxon>Articulavirales</taxon>
        <taxon>Orthomyxoviridae</taxon>
        <taxon>Alphainfluenzavirus</taxon>
        <taxon>Alphainfluenzavirus influenzae</taxon>
        <taxon>Influenza A virus</taxon>
    </lineage>
</organism>
<feature type="chain" id="PRO_0000324229" description="Nuclear export protein">
    <location>
        <begin position="1"/>
        <end position="121"/>
    </location>
</feature>
<feature type="short sequence motif" description="Nuclear export signal" evidence="1">
    <location>
        <begin position="12"/>
        <end position="21"/>
    </location>
</feature>
<feature type="short sequence motif" description="Nuclear export signal" evidence="1">
    <location>
        <begin position="85"/>
        <end position="94"/>
    </location>
</feature>
<accession>O09680</accession>
<accession>Q20SQ9</accession>
<organismHost>
    <name type="scientific">Aves</name>
    <dbReference type="NCBI Taxonomy" id="8782"/>
</organismHost>
<organismHost>
    <name type="scientific">Sus scrofa</name>
    <name type="common">Pig</name>
    <dbReference type="NCBI Taxonomy" id="9823"/>
</organismHost>
<sequence length="121" mass="14338">MDSNTVSSFQDILMRMSKMQLGSSSEDLNGMITQFESLKLYRDSLGEAVMRMGDLHSLQSRNGKWREQLSQKFEEIRWLIEEVRHRLKITENSFEQITFMQALQLLLEVEQEIRTFSFQLI</sequence>
<keyword id="KW-0025">Alternative splicing</keyword>
<keyword id="KW-1048">Host nucleus</keyword>
<keyword id="KW-0945">Host-virus interaction</keyword>
<keyword id="KW-0813">Transport</keyword>
<keyword id="KW-0946">Virion</keyword>
<dbReference type="EMBL" id="U49483">
    <property type="protein sequence ID" value="AAB50994.1"/>
    <property type="molecule type" value="Genomic_RNA"/>
</dbReference>
<dbReference type="EMBL" id="CY004821">
    <property type="protein sequence ID" value="ABB87610.1"/>
    <property type="molecule type" value="Genomic_RNA"/>
</dbReference>
<dbReference type="SMR" id="O09680"/>
<dbReference type="Proteomes" id="UP000125975">
    <property type="component" value="Genome"/>
</dbReference>
<dbReference type="GO" id="GO:0042025">
    <property type="term" value="C:host cell nucleus"/>
    <property type="evidence" value="ECO:0007669"/>
    <property type="project" value="UniProtKB-SubCell"/>
</dbReference>
<dbReference type="GO" id="GO:0044423">
    <property type="term" value="C:virion component"/>
    <property type="evidence" value="ECO:0007669"/>
    <property type="project" value="UniProtKB-UniRule"/>
</dbReference>
<dbReference type="GO" id="GO:0039675">
    <property type="term" value="P:exit of virus from host cell nucleus through nuclear pore"/>
    <property type="evidence" value="ECO:0007669"/>
    <property type="project" value="UniProtKB-UniRule"/>
</dbReference>
<dbReference type="Gene3D" id="1.10.287.230">
    <property type="match status" value="1"/>
</dbReference>
<dbReference type="Gene3D" id="1.10.287.10">
    <property type="entry name" value="S15/NS1, RNA-binding"/>
    <property type="match status" value="1"/>
</dbReference>
<dbReference type="HAMAP" id="MF_04067">
    <property type="entry name" value="INFV_NEP"/>
    <property type="match status" value="1"/>
</dbReference>
<dbReference type="InterPro" id="IPR000968">
    <property type="entry name" value="Flu_NS2"/>
</dbReference>
<dbReference type="Pfam" id="PF00601">
    <property type="entry name" value="Flu_NS2"/>
    <property type="match status" value="1"/>
</dbReference>
<dbReference type="SUPFAM" id="SSF101156">
    <property type="entry name" value="Nonstructural protein ns2, Nep, M1-binding domain"/>
    <property type="match status" value="1"/>
</dbReference>
<name>NEP_I85A7</name>